<keyword id="KW-0963">Cytoplasm</keyword>
<keyword id="KW-0489">Methyltransferase</keyword>
<keyword id="KW-0545">Nucleotide biosynthesis</keyword>
<keyword id="KW-0808">Transferase</keyword>
<name>TYSY_PECCP</name>
<feature type="chain" id="PRO_1000201723" description="Thymidylate synthase">
    <location>
        <begin position="1"/>
        <end position="264"/>
    </location>
</feature>
<feature type="active site" description="Nucleophile" evidence="1">
    <location>
        <position position="146"/>
    </location>
</feature>
<feature type="binding site" description="in other chain" evidence="1">
    <location>
        <position position="21"/>
    </location>
    <ligand>
        <name>dUMP</name>
        <dbReference type="ChEBI" id="CHEBI:246422"/>
        <note>ligand shared between dimeric partners</note>
    </ligand>
</feature>
<feature type="binding site" evidence="1">
    <location>
        <position position="51"/>
    </location>
    <ligand>
        <name>(6R)-5,10-methylene-5,6,7,8-tetrahydrofolate</name>
        <dbReference type="ChEBI" id="CHEBI:15636"/>
    </ligand>
</feature>
<feature type="binding site" evidence="1">
    <location>
        <begin position="126"/>
        <end position="127"/>
    </location>
    <ligand>
        <name>dUMP</name>
        <dbReference type="ChEBI" id="CHEBI:246422"/>
        <note>ligand shared between dimeric partners</note>
    </ligand>
</feature>
<feature type="binding site" description="in other chain" evidence="1">
    <location>
        <begin position="166"/>
        <end position="169"/>
    </location>
    <ligand>
        <name>dUMP</name>
        <dbReference type="ChEBI" id="CHEBI:246422"/>
        <note>ligand shared between dimeric partners</note>
    </ligand>
</feature>
<feature type="binding site" evidence="1">
    <location>
        <position position="169"/>
    </location>
    <ligand>
        <name>(6R)-5,10-methylene-5,6,7,8-tetrahydrofolate</name>
        <dbReference type="ChEBI" id="CHEBI:15636"/>
    </ligand>
</feature>
<feature type="binding site" description="in other chain" evidence="1">
    <location>
        <position position="177"/>
    </location>
    <ligand>
        <name>dUMP</name>
        <dbReference type="ChEBI" id="CHEBI:246422"/>
        <note>ligand shared between dimeric partners</note>
    </ligand>
</feature>
<feature type="binding site" description="in other chain" evidence="1">
    <location>
        <begin position="207"/>
        <end position="209"/>
    </location>
    <ligand>
        <name>dUMP</name>
        <dbReference type="ChEBI" id="CHEBI:246422"/>
        <note>ligand shared between dimeric partners</note>
    </ligand>
</feature>
<feature type="binding site" evidence="1">
    <location>
        <position position="263"/>
    </location>
    <ligand>
        <name>(6R)-5,10-methylene-5,6,7,8-tetrahydrofolate</name>
        <dbReference type="ChEBI" id="CHEBI:15636"/>
    </ligand>
</feature>
<evidence type="ECO:0000255" key="1">
    <source>
        <dbReference type="HAMAP-Rule" id="MF_00008"/>
    </source>
</evidence>
<sequence>MKQYLDLMKKVLEEGTPKADRTGTGTRSIFGHQMRFNLQDGFPLVTTKKCHLRSIIHELLWFLNGDTNVAYLHENKVSIWDEWADENGDLGPVYGKQWRSWGAADGRQIDQLKNVLTQLRQDPDSRRIIVSAWNVGELDKMALAPCHAFFQFYVADGKLSCQLYQRSCDIFLGLPFNIASYALLVHMVAQQCDLDVGDFVWTGGDTHLYNNHLEQTQLQLSREPRALPKLVIKRRPDTLFDYRFEDFEIEGYDPHPTIKAPVAI</sequence>
<dbReference type="EC" id="2.1.1.45" evidence="1"/>
<dbReference type="EMBL" id="CP001657">
    <property type="protein sequence ID" value="ACT11957.1"/>
    <property type="molecule type" value="Genomic_DNA"/>
</dbReference>
<dbReference type="RefSeq" id="WP_012773597.1">
    <property type="nucleotide sequence ID" value="NC_012917.1"/>
</dbReference>
<dbReference type="SMR" id="C6DAE9"/>
<dbReference type="STRING" id="561230.PC1_0907"/>
<dbReference type="KEGG" id="pct:PC1_0907"/>
<dbReference type="eggNOG" id="COG0207">
    <property type="taxonomic scope" value="Bacteria"/>
</dbReference>
<dbReference type="HOGENOM" id="CLU_021669_0_0_6"/>
<dbReference type="OrthoDB" id="9774633at2"/>
<dbReference type="UniPathway" id="UPA00575"/>
<dbReference type="Proteomes" id="UP000002736">
    <property type="component" value="Chromosome"/>
</dbReference>
<dbReference type="GO" id="GO:0005829">
    <property type="term" value="C:cytosol"/>
    <property type="evidence" value="ECO:0007669"/>
    <property type="project" value="TreeGrafter"/>
</dbReference>
<dbReference type="GO" id="GO:0004799">
    <property type="term" value="F:thymidylate synthase activity"/>
    <property type="evidence" value="ECO:0007669"/>
    <property type="project" value="UniProtKB-UniRule"/>
</dbReference>
<dbReference type="GO" id="GO:0006231">
    <property type="term" value="P:dTMP biosynthetic process"/>
    <property type="evidence" value="ECO:0007669"/>
    <property type="project" value="UniProtKB-UniRule"/>
</dbReference>
<dbReference type="GO" id="GO:0006235">
    <property type="term" value="P:dTTP biosynthetic process"/>
    <property type="evidence" value="ECO:0007669"/>
    <property type="project" value="UniProtKB-UniRule"/>
</dbReference>
<dbReference type="GO" id="GO:0032259">
    <property type="term" value="P:methylation"/>
    <property type="evidence" value="ECO:0007669"/>
    <property type="project" value="UniProtKB-KW"/>
</dbReference>
<dbReference type="CDD" id="cd00351">
    <property type="entry name" value="TS_Pyrimidine_HMase"/>
    <property type="match status" value="1"/>
</dbReference>
<dbReference type="FunFam" id="3.30.572.10:FF:000001">
    <property type="entry name" value="Thymidylate synthase"/>
    <property type="match status" value="1"/>
</dbReference>
<dbReference type="Gene3D" id="3.30.572.10">
    <property type="entry name" value="Thymidylate synthase/dCMP hydroxymethylase domain"/>
    <property type="match status" value="1"/>
</dbReference>
<dbReference type="HAMAP" id="MF_00008">
    <property type="entry name" value="Thymidy_synth_bact"/>
    <property type="match status" value="1"/>
</dbReference>
<dbReference type="InterPro" id="IPR045097">
    <property type="entry name" value="Thymidate_synth/dCMP_Mease"/>
</dbReference>
<dbReference type="InterPro" id="IPR023451">
    <property type="entry name" value="Thymidate_synth/dCMP_Mease_dom"/>
</dbReference>
<dbReference type="InterPro" id="IPR036926">
    <property type="entry name" value="Thymidate_synth/dCMP_Mease_sf"/>
</dbReference>
<dbReference type="InterPro" id="IPR000398">
    <property type="entry name" value="Thymidylate_synthase"/>
</dbReference>
<dbReference type="InterPro" id="IPR020940">
    <property type="entry name" value="Thymidylate_synthase_AS"/>
</dbReference>
<dbReference type="NCBIfam" id="NF002497">
    <property type="entry name" value="PRK01827.1-3"/>
    <property type="match status" value="1"/>
</dbReference>
<dbReference type="NCBIfam" id="NF002499">
    <property type="entry name" value="PRK01827.1-5"/>
    <property type="match status" value="1"/>
</dbReference>
<dbReference type="NCBIfam" id="TIGR03284">
    <property type="entry name" value="thym_sym"/>
    <property type="match status" value="2"/>
</dbReference>
<dbReference type="PANTHER" id="PTHR11548:SF9">
    <property type="entry name" value="THYMIDYLATE SYNTHASE"/>
    <property type="match status" value="1"/>
</dbReference>
<dbReference type="PANTHER" id="PTHR11548">
    <property type="entry name" value="THYMIDYLATE SYNTHASE 1"/>
    <property type="match status" value="1"/>
</dbReference>
<dbReference type="Pfam" id="PF00303">
    <property type="entry name" value="Thymidylat_synt"/>
    <property type="match status" value="1"/>
</dbReference>
<dbReference type="PRINTS" id="PR00108">
    <property type="entry name" value="THYMDSNTHASE"/>
</dbReference>
<dbReference type="SUPFAM" id="SSF55831">
    <property type="entry name" value="Thymidylate synthase/dCMP hydroxymethylase"/>
    <property type="match status" value="1"/>
</dbReference>
<dbReference type="PROSITE" id="PS00091">
    <property type="entry name" value="THYMIDYLATE_SYNTHASE"/>
    <property type="match status" value="1"/>
</dbReference>
<proteinExistence type="inferred from homology"/>
<protein>
    <recommendedName>
        <fullName evidence="1">Thymidylate synthase</fullName>
        <shortName evidence="1">TS</shortName>
        <shortName evidence="1">TSase</shortName>
        <ecNumber evidence="1">2.1.1.45</ecNumber>
    </recommendedName>
</protein>
<gene>
    <name evidence="1" type="primary">thyA</name>
    <name type="ordered locus">PC1_0907</name>
</gene>
<reference key="1">
    <citation type="submission" date="2009-07" db="EMBL/GenBank/DDBJ databases">
        <title>Complete sequence of Pectobacterium carotovorum subsp. carotovorum PC1.</title>
        <authorList>
            <consortium name="US DOE Joint Genome Institute"/>
            <person name="Lucas S."/>
            <person name="Copeland A."/>
            <person name="Lapidus A."/>
            <person name="Glavina del Rio T."/>
            <person name="Tice H."/>
            <person name="Bruce D."/>
            <person name="Goodwin L."/>
            <person name="Pitluck S."/>
            <person name="Munk A.C."/>
            <person name="Brettin T."/>
            <person name="Detter J.C."/>
            <person name="Han C."/>
            <person name="Tapia R."/>
            <person name="Larimer F."/>
            <person name="Land M."/>
            <person name="Hauser L."/>
            <person name="Kyrpides N."/>
            <person name="Mikhailova N."/>
            <person name="Balakrishnan V."/>
            <person name="Glasner J."/>
            <person name="Perna N.T."/>
        </authorList>
    </citation>
    <scope>NUCLEOTIDE SEQUENCE [LARGE SCALE GENOMIC DNA]</scope>
    <source>
        <strain>PC1</strain>
    </source>
</reference>
<comment type="function">
    <text evidence="1">Catalyzes the reductive methylation of 2'-deoxyuridine-5'-monophosphate (dUMP) to 2'-deoxythymidine-5'-monophosphate (dTMP) while utilizing 5,10-methylenetetrahydrofolate (mTHF) as the methyl donor and reductant in the reaction, yielding dihydrofolate (DHF) as a by-product. This enzymatic reaction provides an intracellular de novo source of dTMP, an essential precursor for DNA biosynthesis.</text>
</comment>
<comment type="catalytic activity">
    <reaction evidence="1">
        <text>dUMP + (6R)-5,10-methylene-5,6,7,8-tetrahydrofolate = 7,8-dihydrofolate + dTMP</text>
        <dbReference type="Rhea" id="RHEA:12104"/>
        <dbReference type="ChEBI" id="CHEBI:15636"/>
        <dbReference type="ChEBI" id="CHEBI:57451"/>
        <dbReference type="ChEBI" id="CHEBI:63528"/>
        <dbReference type="ChEBI" id="CHEBI:246422"/>
        <dbReference type="EC" id="2.1.1.45"/>
    </reaction>
</comment>
<comment type="pathway">
    <text evidence="1">Pyrimidine metabolism; dTTP biosynthesis.</text>
</comment>
<comment type="subunit">
    <text evidence="1">Homodimer.</text>
</comment>
<comment type="subcellular location">
    <subcellularLocation>
        <location evidence="1">Cytoplasm</location>
    </subcellularLocation>
</comment>
<comment type="similarity">
    <text evidence="1">Belongs to the thymidylate synthase family. Bacterial-type ThyA subfamily.</text>
</comment>
<organism>
    <name type="scientific">Pectobacterium carotovorum subsp. carotovorum (strain PC1)</name>
    <dbReference type="NCBI Taxonomy" id="561230"/>
    <lineage>
        <taxon>Bacteria</taxon>
        <taxon>Pseudomonadati</taxon>
        <taxon>Pseudomonadota</taxon>
        <taxon>Gammaproteobacteria</taxon>
        <taxon>Enterobacterales</taxon>
        <taxon>Pectobacteriaceae</taxon>
        <taxon>Pectobacterium</taxon>
    </lineage>
</organism>
<accession>C6DAE9</accession>